<proteinExistence type="inferred from homology"/>
<name>YOEB_MYCBO</name>
<protein>
    <recommendedName>
        <fullName>Toxin YoeB</fullName>
        <ecNumber>3.1.-.-</ecNumber>
    </recommendedName>
    <alternativeName>
        <fullName>Endoribonuclease YoeB</fullName>
    </alternativeName>
    <alternativeName>
        <fullName>Putative mRNA interferase YoeB</fullName>
    </alternativeName>
</protein>
<dbReference type="EC" id="3.1.-.-"/>
<dbReference type="EMBL" id="LT708304">
    <property type="protein sequence ID" value="SIU02022.1"/>
    <property type="molecule type" value="Genomic_DNA"/>
</dbReference>
<dbReference type="RefSeq" id="NP_857034.1">
    <property type="nucleotide sequence ID" value="NC_002945.3"/>
</dbReference>
<dbReference type="RefSeq" id="WP_003417760.1">
    <property type="nucleotide sequence ID" value="NC_002945.4"/>
</dbReference>
<dbReference type="SMR" id="P64529"/>
<dbReference type="KEGG" id="mbo:BQ2027_MB3393"/>
<dbReference type="PATRIC" id="fig|233413.5.peg.3728"/>
<dbReference type="Proteomes" id="UP000001419">
    <property type="component" value="Chromosome"/>
</dbReference>
<dbReference type="GO" id="GO:0004519">
    <property type="term" value="F:endonuclease activity"/>
    <property type="evidence" value="ECO:0007669"/>
    <property type="project" value="UniProtKB-KW"/>
</dbReference>
<dbReference type="GO" id="GO:0045892">
    <property type="term" value="P:negative regulation of DNA-templated transcription"/>
    <property type="evidence" value="ECO:0007669"/>
    <property type="project" value="TreeGrafter"/>
</dbReference>
<dbReference type="GO" id="GO:0006401">
    <property type="term" value="P:RNA catabolic process"/>
    <property type="evidence" value="ECO:0007669"/>
    <property type="project" value="InterPro"/>
</dbReference>
<dbReference type="Gene3D" id="3.30.2310.20">
    <property type="entry name" value="RelE-like"/>
    <property type="match status" value="1"/>
</dbReference>
<dbReference type="InterPro" id="IPR035093">
    <property type="entry name" value="RelE/ParE_toxin_dom_sf"/>
</dbReference>
<dbReference type="InterPro" id="IPR009614">
    <property type="entry name" value="YoeB_toxin"/>
</dbReference>
<dbReference type="NCBIfam" id="TIGR02116">
    <property type="entry name" value="toxin_Txe_YoeB"/>
    <property type="match status" value="1"/>
</dbReference>
<dbReference type="PANTHER" id="PTHR38039">
    <property type="entry name" value="TOXIN YOEB"/>
    <property type="match status" value="1"/>
</dbReference>
<dbReference type="PANTHER" id="PTHR38039:SF1">
    <property type="entry name" value="TOXIN YOEB"/>
    <property type="match status" value="1"/>
</dbReference>
<dbReference type="Pfam" id="PF06769">
    <property type="entry name" value="YoeB_toxin"/>
    <property type="match status" value="1"/>
</dbReference>
<dbReference type="SUPFAM" id="SSF143011">
    <property type="entry name" value="RelE-like"/>
    <property type="match status" value="1"/>
</dbReference>
<reference key="1">
    <citation type="journal article" date="2003" name="Proc. Natl. Acad. Sci. U.S.A.">
        <title>The complete genome sequence of Mycobacterium bovis.</title>
        <authorList>
            <person name="Garnier T."/>
            <person name="Eiglmeier K."/>
            <person name="Camus J.-C."/>
            <person name="Medina N."/>
            <person name="Mansoor H."/>
            <person name="Pryor M."/>
            <person name="Duthoy S."/>
            <person name="Grondin S."/>
            <person name="Lacroix C."/>
            <person name="Monsempe C."/>
            <person name="Simon S."/>
            <person name="Harris B."/>
            <person name="Atkin R."/>
            <person name="Doggett J."/>
            <person name="Mayes R."/>
            <person name="Keating L."/>
            <person name="Wheeler P.R."/>
            <person name="Parkhill J."/>
            <person name="Barrell B.G."/>
            <person name="Cole S.T."/>
            <person name="Gordon S.V."/>
            <person name="Hewinson R.G."/>
        </authorList>
    </citation>
    <scope>NUCLEOTIDE SEQUENCE [LARGE SCALE GENOMIC DNA]</scope>
    <source>
        <strain>ATCC BAA-935 / AF2122/97</strain>
    </source>
</reference>
<reference key="2">
    <citation type="journal article" date="2017" name="Genome Announc.">
        <title>Updated reference genome sequence and annotation of Mycobacterium bovis AF2122/97.</title>
        <authorList>
            <person name="Malone K.M."/>
            <person name="Farrell D."/>
            <person name="Stuber T.P."/>
            <person name="Schubert O.T."/>
            <person name="Aebersold R."/>
            <person name="Robbe-Austerman S."/>
            <person name="Gordon S.V."/>
        </authorList>
    </citation>
    <scope>NUCLEOTIDE SEQUENCE [LARGE SCALE GENOMIC DNA]</scope>
    <scope>GENOME REANNOTATION</scope>
    <source>
        <strain>ATCC BAA-935 / AF2122/97</strain>
    </source>
</reference>
<comment type="function">
    <text evidence="1">Toxic component of a type II toxin-antitoxin (TA) system. Has RNase activity and preferentially cleaves at the 3'-end of purine ribonucleotides (By similarity).</text>
</comment>
<comment type="subunit">
    <text evidence="1">Forms a toxin-antitoxin complex with YefM in which the toxin is probably inactive.</text>
</comment>
<comment type="similarity">
    <text evidence="2">Belongs to the YoeB family.</text>
</comment>
<evidence type="ECO:0000250" key="1"/>
<evidence type="ECO:0000305" key="2"/>
<feature type="chain" id="PRO_0000216212" description="Toxin YoeB">
    <location>
        <begin position="1"/>
        <end position="85"/>
    </location>
</feature>
<feature type="active site" description="Proton acceptor" evidence="1">
    <location>
        <position position="47"/>
    </location>
</feature>
<feature type="active site" description="Proton donor" evidence="1">
    <location>
        <position position="84"/>
    </location>
</feature>
<gene>
    <name type="primary">yoeB</name>
    <name type="ordered locus">BQ2027_MB3393</name>
</gene>
<organism>
    <name type="scientific">Mycobacterium bovis (strain ATCC BAA-935 / AF2122/97)</name>
    <dbReference type="NCBI Taxonomy" id="233413"/>
    <lineage>
        <taxon>Bacteria</taxon>
        <taxon>Bacillati</taxon>
        <taxon>Actinomycetota</taxon>
        <taxon>Actinomycetes</taxon>
        <taxon>Mycobacteriales</taxon>
        <taxon>Mycobacteriaceae</taxon>
        <taxon>Mycobacterium</taxon>
        <taxon>Mycobacterium tuberculosis complex</taxon>
    </lineage>
</organism>
<sequence length="85" mass="10102">MRSVNFDPDAWEDFLFWLAADRKTARRITRLIGEIQRDPFSGIGKPEPLQGELSGYWSRRIDDEHRLVYRAGDDEVTMLKARYHY</sequence>
<keyword id="KW-0255">Endonuclease</keyword>
<keyword id="KW-0378">Hydrolase</keyword>
<keyword id="KW-0540">Nuclease</keyword>
<keyword id="KW-1185">Reference proteome</keyword>
<keyword id="KW-1277">Toxin-antitoxin system</keyword>
<accession>P64529</accession>
<accession>A0A1R3Y3Z8</accession>
<accession>O50387</accession>
<accession>X2BNR1</accession>